<accession>Q4V908</accession>
<sequence>MNSNVENLPPQVLRLVYKEVSALAADPPEGIKIYPSEEDITELHTSIEGPEGTPYAGGVFRMRLVLGKDFPAVPPRGYFLTKIFHPNVGHKGEICVNVLKRDWKAELGLRHVLLTIKCLLIHPNPESALNEEAGKLLLEDYKEYASRAHLLTEIHAMGGTSGAPQEPADGPQPKKHAGDPNKRVVGAGLPTMGTGTNNSNISNTNIVAKKKTDKKRALRRL</sequence>
<proteinExistence type="evidence at transcript level"/>
<organism>
    <name type="scientific">Danio rerio</name>
    <name type="common">Zebrafish</name>
    <name type="synonym">Brachydanio rerio</name>
    <dbReference type="NCBI Taxonomy" id="7955"/>
    <lineage>
        <taxon>Eukaryota</taxon>
        <taxon>Metazoa</taxon>
        <taxon>Chordata</taxon>
        <taxon>Craniata</taxon>
        <taxon>Vertebrata</taxon>
        <taxon>Euteleostomi</taxon>
        <taxon>Actinopterygii</taxon>
        <taxon>Neopterygii</taxon>
        <taxon>Teleostei</taxon>
        <taxon>Ostariophysi</taxon>
        <taxon>Cypriniformes</taxon>
        <taxon>Danionidae</taxon>
        <taxon>Danioninae</taxon>
        <taxon>Danio</taxon>
    </lineage>
</organism>
<name>UBE2S_DANRE</name>
<keyword id="KW-0067">ATP-binding</keyword>
<keyword id="KW-0131">Cell cycle</keyword>
<keyword id="KW-0132">Cell division</keyword>
<keyword id="KW-0547">Nucleotide-binding</keyword>
<keyword id="KW-1185">Reference proteome</keyword>
<keyword id="KW-0808">Transferase</keyword>
<keyword id="KW-0833">Ubl conjugation pathway</keyword>
<protein>
    <recommendedName>
        <fullName>Ubiquitin-conjugating enzyme E2 S</fullName>
        <ecNumber>2.3.2.23</ecNumber>
    </recommendedName>
    <alternativeName>
        <fullName>E2 ubiquitin-conjugating enzyme S</fullName>
    </alternativeName>
    <alternativeName>
        <fullName>Ubiquitin carrier protein S</fullName>
    </alternativeName>
    <alternativeName>
        <fullName>Ubiquitin-protein ligase S</fullName>
    </alternativeName>
</protein>
<evidence type="ECO:0000255" key="1">
    <source>
        <dbReference type="PROSITE-ProRule" id="PRU00388"/>
    </source>
</evidence>
<evidence type="ECO:0000255" key="2">
    <source>
        <dbReference type="PROSITE-ProRule" id="PRU10133"/>
    </source>
</evidence>
<evidence type="ECO:0000256" key="3">
    <source>
        <dbReference type="SAM" id="MobiDB-lite"/>
    </source>
</evidence>
<gene>
    <name type="primary">ube2s</name>
    <name type="ORF">zgc:114060</name>
</gene>
<dbReference type="EC" id="2.3.2.23"/>
<dbReference type="EMBL" id="BC097122">
    <property type="protein sequence ID" value="AAH97122.1"/>
    <property type="molecule type" value="mRNA"/>
</dbReference>
<dbReference type="RefSeq" id="NP_001020707.1">
    <property type="nucleotide sequence ID" value="NM_001025536.1"/>
</dbReference>
<dbReference type="SMR" id="Q4V908"/>
<dbReference type="FunCoup" id="Q4V908">
    <property type="interactions" value="1970"/>
</dbReference>
<dbReference type="STRING" id="7955.ENSDARP00000047451"/>
<dbReference type="PaxDb" id="7955-ENSDARP00000047451"/>
<dbReference type="Ensembl" id="ENSDART00000047452">
    <property type="protein sequence ID" value="ENSDARP00000047451"/>
    <property type="gene ID" value="ENSDARG00000031775"/>
</dbReference>
<dbReference type="GeneID" id="565498"/>
<dbReference type="KEGG" id="dre:565498"/>
<dbReference type="AGR" id="ZFIN:ZDB-GENE-050913-92"/>
<dbReference type="CTD" id="27338"/>
<dbReference type="ZFIN" id="ZDB-GENE-050913-92">
    <property type="gene designation" value="ube2s"/>
</dbReference>
<dbReference type="eggNOG" id="KOG0423">
    <property type="taxonomic scope" value="Eukaryota"/>
</dbReference>
<dbReference type="HOGENOM" id="CLU_030988_5_3_1"/>
<dbReference type="InParanoid" id="Q4V908"/>
<dbReference type="OMA" id="QPAKCGA"/>
<dbReference type="OrthoDB" id="10069349at2759"/>
<dbReference type="PhylomeDB" id="Q4V908"/>
<dbReference type="TreeFam" id="TF101120"/>
<dbReference type="Reactome" id="R-DRE-8866652">
    <property type="pathway name" value="Synthesis of active ubiquitin: roles of E1 and E2 enzymes"/>
</dbReference>
<dbReference type="Reactome" id="R-DRE-983168">
    <property type="pathway name" value="Antigen processing: Ubiquitination &amp; Proteasome degradation"/>
</dbReference>
<dbReference type="UniPathway" id="UPA00143"/>
<dbReference type="PRO" id="PR:Q4V908"/>
<dbReference type="Proteomes" id="UP000000437">
    <property type="component" value="Alternate scaffold 16"/>
</dbReference>
<dbReference type="Proteomes" id="UP000000437">
    <property type="component" value="Chromosome 16"/>
</dbReference>
<dbReference type="Bgee" id="ENSDARG00000031775">
    <property type="expression patterns" value="Expressed in cleaving embryo and 28 other cell types or tissues"/>
</dbReference>
<dbReference type="GO" id="GO:0005680">
    <property type="term" value="C:anaphase-promoting complex"/>
    <property type="evidence" value="ECO:0000250"/>
    <property type="project" value="UniProtKB"/>
</dbReference>
<dbReference type="GO" id="GO:0005634">
    <property type="term" value="C:nucleus"/>
    <property type="evidence" value="ECO:0000318"/>
    <property type="project" value="GO_Central"/>
</dbReference>
<dbReference type="GO" id="GO:0005524">
    <property type="term" value="F:ATP binding"/>
    <property type="evidence" value="ECO:0007669"/>
    <property type="project" value="UniProtKB-KW"/>
</dbReference>
<dbReference type="GO" id="GO:0061631">
    <property type="term" value="F:ubiquitin conjugating enzyme activity"/>
    <property type="evidence" value="ECO:0000318"/>
    <property type="project" value="GO_Central"/>
</dbReference>
<dbReference type="GO" id="GO:0031145">
    <property type="term" value="P:anaphase-promoting complex-dependent catabolic process"/>
    <property type="evidence" value="ECO:0000250"/>
    <property type="project" value="UniProtKB"/>
</dbReference>
<dbReference type="GO" id="GO:0051301">
    <property type="term" value="P:cell division"/>
    <property type="evidence" value="ECO:0007669"/>
    <property type="project" value="UniProtKB-KW"/>
</dbReference>
<dbReference type="GO" id="GO:0010458">
    <property type="term" value="P:exit from mitosis"/>
    <property type="evidence" value="ECO:0000250"/>
    <property type="project" value="UniProtKB"/>
</dbReference>
<dbReference type="GO" id="GO:0010994">
    <property type="term" value="P:free ubiquitin chain polymerization"/>
    <property type="evidence" value="ECO:0000250"/>
    <property type="project" value="UniProtKB"/>
</dbReference>
<dbReference type="GO" id="GO:1904668">
    <property type="term" value="P:positive regulation of ubiquitin protein ligase activity"/>
    <property type="evidence" value="ECO:0000250"/>
    <property type="project" value="UniProtKB"/>
</dbReference>
<dbReference type="GO" id="GO:0070979">
    <property type="term" value="P:protein K11-linked ubiquitination"/>
    <property type="evidence" value="ECO:0000250"/>
    <property type="project" value="UniProtKB"/>
</dbReference>
<dbReference type="GO" id="GO:0000209">
    <property type="term" value="P:protein polyubiquitination"/>
    <property type="evidence" value="ECO:0000318"/>
    <property type="project" value="GO_Central"/>
</dbReference>
<dbReference type="GO" id="GO:0006511">
    <property type="term" value="P:ubiquitin-dependent protein catabolic process"/>
    <property type="evidence" value="ECO:0000318"/>
    <property type="project" value="GO_Central"/>
</dbReference>
<dbReference type="CDD" id="cd23804">
    <property type="entry name" value="UBCc_UBE2S"/>
    <property type="match status" value="1"/>
</dbReference>
<dbReference type="FunFam" id="3.10.110.10:FF:000034">
    <property type="entry name" value="Ubiquitin-conjugating enzyme E2 S"/>
    <property type="match status" value="1"/>
</dbReference>
<dbReference type="Gene3D" id="3.10.110.10">
    <property type="entry name" value="Ubiquitin Conjugating Enzyme"/>
    <property type="match status" value="1"/>
</dbReference>
<dbReference type="InterPro" id="IPR050113">
    <property type="entry name" value="Ub_conjugating_enzyme"/>
</dbReference>
<dbReference type="InterPro" id="IPR000608">
    <property type="entry name" value="UBQ-conjugat_E2_core"/>
</dbReference>
<dbReference type="InterPro" id="IPR023313">
    <property type="entry name" value="UBQ-conjugating_AS"/>
</dbReference>
<dbReference type="InterPro" id="IPR016135">
    <property type="entry name" value="UBQ-conjugating_enzyme/RWD"/>
</dbReference>
<dbReference type="PANTHER" id="PTHR24067">
    <property type="entry name" value="UBIQUITIN-CONJUGATING ENZYME E2"/>
    <property type="match status" value="1"/>
</dbReference>
<dbReference type="Pfam" id="PF00179">
    <property type="entry name" value="UQ_con"/>
    <property type="match status" value="1"/>
</dbReference>
<dbReference type="SMART" id="SM00212">
    <property type="entry name" value="UBCc"/>
    <property type="match status" value="1"/>
</dbReference>
<dbReference type="SUPFAM" id="SSF54495">
    <property type="entry name" value="UBC-like"/>
    <property type="match status" value="1"/>
</dbReference>
<dbReference type="PROSITE" id="PS00183">
    <property type="entry name" value="UBC_1"/>
    <property type="match status" value="1"/>
</dbReference>
<dbReference type="PROSITE" id="PS50127">
    <property type="entry name" value="UBC_2"/>
    <property type="match status" value="1"/>
</dbReference>
<comment type="function">
    <text evidence="1">Catalyzes the covalent attachment of ubiquitin to other proteins. Acts as an essential factor of the anaphase promoting complex/cyclosome (APC/C), a cell cycle-regulated ubiquitin ligase that controls progression through mitosis. Acts by specifically elongating 'Lys-11'-linked polyubiquitin chains initiated by the E2 enzyme ube2c/ubch10 on APC/C substrates, enhancing the degradation of APC/C substrates by the proteasome and promoting mitotic exit.</text>
</comment>
<comment type="catalytic activity">
    <reaction evidence="1 2">
        <text>S-ubiquitinyl-[E1 ubiquitin-activating enzyme]-L-cysteine + [E2 ubiquitin-conjugating enzyme]-L-cysteine = [E1 ubiquitin-activating enzyme]-L-cysteine + S-ubiquitinyl-[E2 ubiquitin-conjugating enzyme]-L-cysteine.</text>
        <dbReference type="EC" id="2.3.2.23"/>
    </reaction>
</comment>
<comment type="pathway">
    <text evidence="1">Protein modification; protein ubiquitination.</text>
</comment>
<comment type="similarity">
    <text evidence="1">Belongs to the ubiquitin-conjugating enzyme family.</text>
</comment>
<reference key="1">
    <citation type="submission" date="2005-06" db="EMBL/GenBank/DDBJ databases">
        <authorList>
            <consortium name="NIH - Zebrafish Gene Collection (ZGC) project"/>
        </authorList>
    </citation>
    <scope>NUCLEOTIDE SEQUENCE [LARGE SCALE MRNA]</scope>
    <source>
        <tissue>Embryo</tissue>
    </source>
</reference>
<feature type="chain" id="PRO_0000390429" description="Ubiquitin-conjugating enzyme E2 S">
    <location>
        <begin position="1"/>
        <end position="221"/>
    </location>
</feature>
<feature type="domain" description="UBC core" evidence="1">
    <location>
        <begin position="11"/>
        <end position="157"/>
    </location>
</feature>
<feature type="region of interest" description="Disordered" evidence="3">
    <location>
        <begin position="158"/>
        <end position="221"/>
    </location>
</feature>
<feature type="compositionally biased region" description="Low complexity" evidence="3">
    <location>
        <begin position="193"/>
        <end position="206"/>
    </location>
</feature>
<feature type="compositionally biased region" description="Basic residues" evidence="3">
    <location>
        <begin position="208"/>
        <end position="221"/>
    </location>
</feature>
<feature type="active site" description="Glycyl thioester intermediate" evidence="1 2">
    <location>
        <position position="95"/>
    </location>
</feature>